<accession>C6DG55</accession>
<proteinExistence type="inferred from homology"/>
<feature type="chain" id="PRO_1000214712" description="Large ribosomal subunit protein uL15">
    <location>
        <begin position="1"/>
        <end position="144"/>
    </location>
</feature>
<feature type="region of interest" description="Disordered" evidence="2">
    <location>
        <begin position="1"/>
        <end position="53"/>
    </location>
</feature>
<feature type="compositionally biased region" description="Gly residues" evidence="2">
    <location>
        <begin position="21"/>
        <end position="31"/>
    </location>
</feature>
<reference key="1">
    <citation type="submission" date="2009-07" db="EMBL/GenBank/DDBJ databases">
        <title>Complete sequence of Pectobacterium carotovorum subsp. carotovorum PC1.</title>
        <authorList>
            <consortium name="US DOE Joint Genome Institute"/>
            <person name="Lucas S."/>
            <person name="Copeland A."/>
            <person name="Lapidus A."/>
            <person name="Glavina del Rio T."/>
            <person name="Tice H."/>
            <person name="Bruce D."/>
            <person name="Goodwin L."/>
            <person name="Pitluck S."/>
            <person name="Munk A.C."/>
            <person name="Brettin T."/>
            <person name="Detter J.C."/>
            <person name="Han C."/>
            <person name="Tapia R."/>
            <person name="Larimer F."/>
            <person name="Land M."/>
            <person name="Hauser L."/>
            <person name="Kyrpides N."/>
            <person name="Mikhailova N."/>
            <person name="Balakrishnan V."/>
            <person name="Glasner J."/>
            <person name="Perna N.T."/>
        </authorList>
    </citation>
    <scope>NUCLEOTIDE SEQUENCE [LARGE SCALE GENOMIC DNA]</scope>
    <source>
        <strain>PC1</strain>
    </source>
</reference>
<name>RL15_PECCP</name>
<sequence length="144" mass="15175">MRLNTLSPAEGAKHAPKRLGRGIGSGLGKTGGRGHKGQKSRSGGGVRRGFEGGQMPLYRRLPKFGFTSRKAMITSEVRLSDLAKVEGDVVDLNTLKAANVIGIQIEFAKVILSGEVARPVTIRGLRVTKGARAAIEAAGGKIEE</sequence>
<evidence type="ECO:0000255" key="1">
    <source>
        <dbReference type="HAMAP-Rule" id="MF_01341"/>
    </source>
</evidence>
<evidence type="ECO:0000256" key="2">
    <source>
        <dbReference type="SAM" id="MobiDB-lite"/>
    </source>
</evidence>
<evidence type="ECO:0000305" key="3"/>
<organism>
    <name type="scientific">Pectobacterium carotovorum subsp. carotovorum (strain PC1)</name>
    <dbReference type="NCBI Taxonomy" id="561230"/>
    <lineage>
        <taxon>Bacteria</taxon>
        <taxon>Pseudomonadati</taxon>
        <taxon>Pseudomonadota</taxon>
        <taxon>Gammaproteobacteria</taxon>
        <taxon>Enterobacterales</taxon>
        <taxon>Pectobacteriaceae</taxon>
        <taxon>Pectobacterium</taxon>
    </lineage>
</organism>
<protein>
    <recommendedName>
        <fullName evidence="1">Large ribosomal subunit protein uL15</fullName>
    </recommendedName>
    <alternativeName>
        <fullName evidence="3">50S ribosomal protein L15</fullName>
    </alternativeName>
</protein>
<keyword id="KW-0687">Ribonucleoprotein</keyword>
<keyword id="KW-0689">Ribosomal protein</keyword>
<keyword id="KW-0694">RNA-binding</keyword>
<keyword id="KW-0699">rRNA-binding</keyword>
<gene>
    <name evidence="1" type="primary">rplO</name>
    <name type="ordered locus">PC1_3803</name>
</gene>
<dbReference type="EMBL" id="CP001657">
    <property type="protein sequence ID" value="ACT14818.1"/>
    <property type="molecule type" value="Genomic_DNA"/>
</dbReference>
<dbReference type="RefSeq" id="WP_015841922.1">
    <property type="nucleotide sequence ID" value="NC_012917.1"/>
</dbReference>
<dbReference type="SMR" id="C6DG55"/>
<dbReference type="STRING" id="561230.PC1_3803"/>
<dbReference type="GeneID" id="90765107"/>
<dbReference type="KEGG" id="pct:PC1_3803"/>
<dbReference type="eggNOG" id="COG0200">
    <property type="taxonomic scope" value="Bacteria"/>
</dbReference>
<dbReference type="HOGENOM" id="CLU_055188_4_2_6"/>
<dbReference type="OrthoDB" id="9810293at2"/>
<dbReference type="Proteomes" id="UP000002736">
    <property type="component" value="Chromosome"/>
</dbReference>
<dbReference type="GO" id="GO:0022625">
    <property type="term" value="C:cytosolic large ribosomal subunit"/>
    <property type="evidence" value="ECO:0007669"/>
    <property type="project" value="TreeGrafter"/>
</dbReference>
<dbReference type="GO" id="GO:0019843">
    <property type="term" value="F:rRNA binding"/>
    <property type="evidence" value="ECO:0007669"/>
    <property type="project" value="UniProtKB-UniRule"/>
</dbReference>
<dbReference type="GO" id="GO:0003735">
    <property type="term" value="F:structural constituent of ribosome"/>
    <property type="evidence" value="ECO:0007669"/>
    <property type="project" value="InterPro"/>
</dbReference>
<dbReference type="GO" id="GO:0006412">
    <property type="term" value="P:translation"/>
    <property type="evidence" value="ECO:0007669"/>
    <property type="project" value="UniProtKB-UniRule"/>
</dbReference>
<dbReference type="FunFam" id="3.100.10.10:FF:000003">
    <property type="entry name" value="50S ribosomal protein L15"/>
    <property type="match status" value="1"/>
</dbReference>
<dbReference type="Gene3D" id="3.100.10.10">
    <property type="match status" value="1"/>
</dbReference>
<dbReference type="HAMAP" id="MF_01341">
    <property type="entry name" value="Ribosomal_uL15"/>
    <property type="match status" value="1"/>
</dbReference>
<dbReference type="InterPro" id="IPR030878">
    <property type="entry name" value="Ribosomal_uL15"/>
</dbReference>
<dbReference type="InterPro" id="IPR021131">
    <property type="entry name" value="Ribosomal_uL15/eL18"/>
</dbReference>
<dbReference type="InterPro" id="IPR036227">
    <property type="entry name" value="Ribosomal_uL15/eL18_sf"/>
</dbReference>
<dbReference type="InterPro" id="IPR005749">
    <property type="entry name" value="Ribosomal_uL15_bac-type"/>
</dbReference>
<dbReference type="InterPro" id="IPR001196">
    <property type="entry name" value="Ribosomal_uL15_CS"/>
</dbReference>
<dbReference type="NCBIfam" id="TIGR01071">
    <property type="entry name" value="rplO_bact"/>
    <property type="match status" value="1"/>
</dbReference>
<dbReference type="PANTHER" id="PTHR12934">
    <property type="entry name" value="50S RIBOSOMAL PROTEIN L15"/>
    <property type="match status" value="1"/>
</dbReference>
<dbReference type="PANTHER" id="PTHR12934:SF11">
    <property type="entry name" value="LARGE RIBOSOMAL SUBUNIT PROTEIN UL15M"/>
    <property type="match status" value="1"/>
</dbReference>
<dbReference type="Pfam" id="PF00828">
    <property type="entry name" value="Ribosomal_L27A"/>
    <property type="match status" value="1"/>
</dbReference>
<dbReference type="SUPFAM" id="SSF52080">
    <property type="entry name" value="Ribosomal proteins L15p and L18e"/>
    <property type="match status" value="1"/>
</dbReference>
<dbReference type="PROSITE" id="PS00475">
    <property type="entry name" value="RIBOSOMAL_L15"/>
    <property type="match status" value="1"/>
</dbReference>
<comment type="function">
    <text evidence="1">Binds to the 23S rRNA.</text>
</comment>
<comment type="subunit">
    <text evidence="1">Part of the 50S ribosomal subunit.</text>
</comment>
<comment type="similarity">
    <text evidence="1">Belongs to the universal ribosomal protein uL15 family.</text>
</comment>